<evidence type="ECO:0000255" key="1">
    <source>
        <dbReference type="HAMAP-Rule" id="MF_00315"/>
    </source>
</evidence>
<organism>
    <name type="scientific">Rhodococcus jostii (strain RHA1)</name>
    <dbReference type="NCBI Taxonomy" id="101510"/>
    <lineage>
        <taxon>Bacteria</taxon>
        <taxon>Bacillati</taxon>
        <taxon>Actinomycetota</taxon>
        <taxon>Actinomycetes</taxon>
        <taxon>Mycobacteriales</taxon>
        <taxon>Nocardiaceae</taxon>
        <taxon>Rhodococcus</taxon>
    </lineage>
</organism>
<keyword id="KW-0414">Isoprene biosynthesis</keyword>
<keyword id="KW-0460">Magnesium</keyword>
<keyword id="KW-0479">Metal-binding</keyword>
<keyword id="KW-0784">Thiamine biosynthesis</keyword>
<keyword id="KW-0786">Thiamine pyrophosphate</keyword>
<keyword id="KW-0808">Transferase</keyword>
<proteinExistence type="inferred from homology"/>
<dbReference type="EC" id="2.2.1.7" evidence="1"/>
<dbReference type="EMBL" id="CP000431">
    <property type="protein sequence ID" value="ABG98615.1"/>
    <property type="molecule type" value="Genomic_DNA"/>
</dbReference>
<dbReference type="RefSeq" id="WP_009480093.1">
    <property type="nucleotide sequence ID" value="NC_008268.1"/>
</dbReference>
<dbReference type="SMR" id="Q0S1H1"/>
<dbReference type="KEGG" id="rha:RHA1_ro06843"/>
<dbReference type="eggNOG" id="COG1154">
    <property type="taxonomic scope" value="Bacteria"/>
</dbReference>
<dbReference type="HOGENOM" id="CLU_009227_1_4_11"/>
<dbReference type="OrthoDB" id="9803371at2"/>
<dbReference type="UniPathway" id="UPA00064">
    <property type="reaction ID" value="UER00091"/>
</dbReference>
<dbReference type="Proteomes" id="UP000008710">
    <property type="component" value="Chromosome"/>
</dbReference>
<dbReference type="GO" id="GO:0005829">
    <property type="term" value="C:cytosol"/>
    <property type="evidence" value="ECO:0007669"/>
    <property type="project" value="TreeGrafter"/>
</dbReference>
<dbReference type="GO" id="GO:0008661">
    <property type="term" value="F:1-deoxy-D-xylulose-5-phosphate synthase activity"/>
    <property type="evidence" value="ECO:0007669"/>
    <property type="project" value="UniProtKB-UniRule"/>
</dbReference>
<dbReference type="GO" id="GO:0000287">
    <property type="term" value="F:magnesium ion binding"/>
    <property type="evidence" value="ECO:0007669"/>
    <property type="project" value="UniProtKB-UniRule"/>
</dbReference>
<dbReference type="GO" id="GO:0030976">
    <property type="term" value="F:thiamine pyrophosphate binding"/>
    <property type="evidence" value="ECO:0007669"/>
    <property type="project" value="UniProtKB-UniRule"/>
</dbReference>
<dbReference type="GO" id="GO:0052865">
    <property type="term" value="P:1-deoxy-D-xylulose 5-phosphate biosynthetic process"/>
    <property type="evidence" value="ECO:0007669"/>
    <property type="project" value="UniProtKB-UniPathway"/>
</dbReference>
<dbReference type="GO" id="GO:0019288">
    <property type="term" value="P:isopentenyl diphosphate biosynthetic process, methylerythritol 4-phosphate pathway"/>
    <property type="evidence" value="ECO:0007669"/>
    <property type="project" value="TreeGrafter"/>
</dbReference>
<dbReference type="GO" id="GO:0016114">
    <property type="term" value="P:terpenoid biosynthetic process"/>
    <property type="evidence" value="ECO:0007669"/>
    <property type="project" value="UniProtKB-UniRule"/>
</dbReference>
<dbReference type="GO" id="GO:0009228">
    <property type="term" value="P:thiamine biosynthetic process"/>
    <property type="evidence" value="ECO:0007669"/>
    <property type="project" value="UniProtKB-UniRule"/>
</dbReference>
<dbReference type="CDD" id="cd02007">
    <property type="entry name" value="TPP_DXS"/>
    <property type="match status" value="1"/>
</dbReference>
<dbReference type="CDD" id="cd07033">
    <property type="entry name" value="TPP_PYR_DXS_TK_like"/>
    <property type="match status" value="1"/>
</dbReference>
<dbReference type="FunFam" id="3.40.50.920:FF:000002">
    <property type="entry name" value="1-deoxy-D-xylulose-5-phosphate synthase"/>
    <property type="match status" value="1"/>
</dbReference>
<dbReference type="FunFam" id="3.40.50.970:FF:000005">
    <property type="entry name" value="1-deoxy-D-xylulose-5-phosphate synthase"/>
    <property type="match status" value="1"/>
</dbReference>
<dbReference type="Gene3D" id="3.40.50.920">
    <property type="match status" value="1"/>
</dbReference>
<dbReference type="Gene3D" id="3.40.50.970">
    <property type="match status" value="2"/>
</dbReference>
<dbReference type="HAMAP" id="MF_00315">
    <property type="entry name" value="DXP_synth"/>
    <property type="match status" value="1"/>
</dbReference>
<dbReference type="InterPro" id="IPR005477">
    <property type="entry name" value="Dxylulose-5-P_synthase"/>
</dbReference>
<dbReference type="InterPro" id="IPR029061">
    <property type="entry name" value="THDP-binding"/>
</dbReference>
<dbReference type="InterPro" id="IPR009014">
    <property type="entry name" value="Transketo_C/PFOR_II"/>
</dbReference>
<dbReference type="InterPro" id="IPR005475">
    <property type="entry name" value="Transketolase-like_Pyr-bd"/>
</dbReference>
<dbReference type="InterPro" id="IPR020826">
    <property type="entry name" value="Transketolase_BS"/>
</dbReference>
<dbReference type="InterPro" id="IPR033248">
    <property type="entry name" value="Transketolase_C"/>
</dbReference>
<dbReference type="InterPro" id="IPR049557">
    <property type="entry name" value="Transketolase_CS"/>
</dbReference>
<dbReference type="NCBIfam" id="TIGR00204">
    <property type="entry name" value="dxs"/>
    <property type="match status" value="1"/>
</dbReference>
<dbReference type="NCBIfam" id="NF003933">
    <property type="entry name" value="PRK05444.2-2"/>
    <property type="match status" value="1"/>
</dbReference>
<dbReference type="PANTHER" id="PTHR43322">
    <property type="entry name" value="1-D-DEOXYXYLULOSE 5-PHOSPHATE SYNTHASE-RELATED"/>
    <property type="match status" value="1"/>
</dbReference>
<dbReference type="PANTHER" id="PTHR43322:SF5">
    <property type="entry name" value="1-DEOXY-D-XYLULOSE-5-PHOSPHATE SYNTHASE, CHLOROPLASTIC"/>
    <property type="match status" value="1"/>
</dbReference>
<dbReference type="Pfam" id="PF13292">
    <property type="entry name" value="DXP_synthase_N"/>
    <property type="match status" value="1"/>
</dbReference>
<dbReference type="Pfam" id="PF02779">
    <property type="entry name" value="Transket_pyr"/>
    <property type="match status" value="1"/>
</dbReference>
<dbReference type="Pfam" id="PF02780">
    <property type="entry name" value="Transketolase_C"/>
    <property type="match status" value="1"/>
</dbReference>
<dbReference type="SMART" id="SM00861">
    <property type="entry name" value="Transket_pyr"/>
    <property type="match status" value="1"/>
</dbReference>
<dbReference type="SUPFAM" id="SSF52518">
    <property type="entry name" value="Thiamin diphosphate-binding fold (THDP-binding)"/>
    <property type="match status" value="2"/>
</dbReference>
<dbReference type="SUPFAM" id="SSF52922">
    <property type="entry name" value="TK C-terminal domain-like"/>
    <property type="match status" value="1"/>
</dbReference>
<dbReference type="PROSITE" id="PS00801">
    <property type="entry name" value="TRANSKETOLASE_1"/>
    <property type="match status" value="1"/>
</dbReference>
<dbReference type="PROSITE" id="PS00802">
    <property type="entry name" value="TRANSKETOLASE_2"/>
    <property type="match status" value="1"/>
</dbReference>
<name>DXS_RHOJR</name>
<comment type="function">
    <text evidence="1">Catalyzes the acyloin condensation reaction between C atoms 2 and 3 of pyruvate and glyceraldehyde 3-phosphate to yield 1-deoxy-D-xylulose-5-phosphate (DXP).</text>
</comment>
<comment type="catalytic activity">
    <reaction evidence="1">
        <text>D-glyceraldehyde 3-phosphate + pyruvate + H(+) = 1-deoxy-D-xylulose 5-phosphate + CO2</text>
        <dbReference type="Rhea" id="RHEA:12605"/>
        <dbReference type="ChEBI" id="CHEBI:15361"/>
        <dbReference type="ChEBI" id="CHEBI:15378"/>
        <dbReference type="ChEBI" id="CHEBI:16526"/>
        <dbReference type="ChEBI" id="CHEBI:57792"/>
        <dbReference type="ChEBI" id="CHEBI:59776"/>
        <dbReference type="EC" id="2.2.1.7"/>
    </reaction>
</comment>
<comment type="cofactor">
    <cofactor evidence="1">
        <name>Mg(2+)</name>
        <dbReference type="ChEBI" id="CHEBI:18420"/>
    </cofactor>
    <text evidence="1">Binds 1 Mg(2+) ion per subunit.</text>
</comment>
<comment type="cofactor">
    <cofactor evidence="1">
        <name>thiamine diphosphate</name>
        <dbReference type="ChEBI" id="CHEBI:58937"/>
    </cofactor>
    <text evidence="1">Binds 1 thiamine pyrophosphate per subunit.</text>
</comment>
<comment type="pathway">
    <text evidence="1">Metabolic intermediate biosynthesis; 1-deoxy-D-xylulose 5-phosphate biosynthesis; 1-deoxy-D-xylulose 5-phosphate from D-glyceraldehyde 3-phosphate and pyruvate: step 1/1.</text>
</comment>
<comment type="subunit">
    <text evidence="1">Homodimer.</text>
</comment>
<comment type="similarity">
    <text evidence="1">Belongs to the transketolase family. DXPS subfamily.</text>
</comment>
<accession>Q0S1H1</accession>
<gene>
    <name evidence="1" type="primary">dxs</name>
    <name type="ordered locus">RHA1_ro06843</name>
</gene>
<sequence>MGVLARIQTPDDLRQLNSAEMKQLAAEIREFLVQKVAATGGHLGPNLGVVELTLALHRIFDSPADPIIFDTGHQAYVHKILTGRKDDFDSLRKQGGLSGYPCRAESDHDWVESSHASASLSYADGLAKAFELTGQDRHVVAVVGDGALTGGMCWEALNNIAAGKDRSVVIVVNDNGRSYAPTIGGLADHLAALRLQPGYERILDSGRRMVKKLPWVGRTAYSVLHGMKAGLKDAVAPQVMFTDLGIKYLGPVDGHDEAALESALRRAKAFGGPVIVHAVTRKGMGYAPAENHVADQMHSTGVIDPITGRGTGSASADWTSVFSAELIDQASHRQDIVAITAAMAGPTGLAAFGEKYPDRMFDVGIAEQHAVTSAAGLALGGLHPVVAVYSTFLNRAFDQLLMDVALLKLPVTLVLDRAGITGNDGASHNGMWDMSLLGIVPGMKVAAPRDTATLREELDEALAVDDGPTALRFPKGTVGDDVPAVSRLDGVVDILRAPSGRNDVLIVSVGAFAGLALAAAERLEQQGISATVVDPRWVLPVPESLVKLAEDYTMVVTVEDSGLHGGVGSTVSAALRAAGVDVPCRDLGVPQQFLDHASRAQIHAELGLTAQDVARQITGWFAGLGNLRPEQQNGVVADLDAQRAEKQQG</sequence>
<protein>
    <recommendedName>
        <fullName evidence="1">1-deoxy-D-xylulose-5-phosphate synthase</fullName>
        <ecNumber evidence="1">2.2.1.7</ecNumber>
    </recommendedName>
    <alternativeName>
        <fullName evidence="1">1-deoxyxylulose-5-phosphate synthase</fullName>
        <shortName evidence="1">DXP synthase</shortName>
        <shortName evidence="1">DXPS</shortName>
    </alternativeName>
</protein>
<reference key="1">
    <citation type="journal article" date="2006" name="Proc. Natl. Acad. Sci. U.S.A.">
        <title>The complete genome of Rhodococcus sp. RHA1 provides insights into a catabolic powerhouse.</title>
        <authorList>
            <person name="McLeod M.P."/>
            <person name="Warren R.L."/>
            <person name="Hsiao W.W.L."/>
            <person name="Araki N."/>
            <person name="Myhre M."/>
            <person name="Fernandes C."/>
            <person name="Miyazawa D."/>
            <person name="Wong W."/>
            <person name="Lillquist A.L."/>
            <person name="Wang D."/>
            <person name="Dosanjh M."/>
            <person name="Hara H."/>
            <person name="Petrescu A."/>
            <person name="Morin R.D."/>
            <person name="Yang G."/>
            <person name="Stott J.M."/>
            <person name="Schein J.E."/>
            <person name="Shin H."/>
            <person name="Smailus D."/>
            <person name="Siddiqui A.S."/>
            <person name="Marra M.A."/>
            <person name="Jones S.J.M."/>
            <person name="Holt R."/>
            <person name="Brinkman F.S.L."/>
            <person name="Miyauchi K."/>
            <person name="Fukuda M."/>
            <person name="Davies J.E."/>
            <person name="Mohn W.W."/>
            <person name="Eltis L.D."/>
        </authorList>
    </citation>
    <scope>NUCLEOTIDE SEQUENCE [LARGE SCALE GENOMIC DNA]</scope>
    <source>
        <strain>RHA1</strain>
    </source>
</reference>
<feature type="chain" id="PRO_0000256477" description="1-deoxy-D-xylulose-5-phosphate synthase">
    <location>
        <begin position="1"/>
        <end position="649"/>
    </location>
</feature>
<feature type="binding site" evidence="1">
    <location>
        <position position="73"/>
    </location>
    <ligand>
        <name>thiamine diphosphate</name>
        <dbReference type="ChEBI" id="CHEBI:58937"/>
    </ligand>
</feature>
<feature type="binding site" evidence="1">
    <location>
        <begin position="114"/>
        <end position="116"/>
    </location>
    <ligand>
        <name>thiamine diphosphate</name>
        <dbReference type="ChEBI" id="CHEBI:58937"/>
    </ligand>
</feature>
<feature type="binding site" evidence="1">
    <location>
        <position position="145"/>
    </location>
    <ligand>
        <name>Mg(2+)</name>
        <dbReference type="ChEBI" id="CHEBI:18420"/>
    </ligand>
</feature>
<feature type="binding site" evidence="1">
    <location>
        <begin position="146"/>
        <end position="147"/>
    </location>
    <ligand>
        <name>thiamine diphosphate</name>
        <dbReference type="ChEBI" id="CHEBI:58937"/>
    </ligand>
</feature>
<feature type="binding site" evidence="1">
    <location>
        <position position="175"/>
    </location>
    <ligand>
        <name>Mg(2+)</name>
        <dbReference type="ChEBI" id="CHEBI:18420"/>
    </ligand>
</feature>
<feature type="binding site" evidence="1">
    <location>
        <position position="175"/>
    </location>
    <ligand>
        <name>thiamine diphosphate</name>
        <dbReference type="ChEBI" id="CHEBI:58937"/>
    </ligand>
</feature>
<feature type="binding site" evidence="1">
    <location>
        <position position="286"/>
    </location>
    <ligand>
        <name>thiamine diphosphate</name>
        <dbReference type="ChEBI" id="CHEBI:58937"/>
    </ligand>
</feature>
<feature type="binding site" evidence="1">
    <location>
        <position position="367"/>
    </location>
    <ligand>
        <name>thiamine diphosphate</name>
        <dbReference type="ChEBI" id="CHEBI:58937"/>
    </ligand>
</feature>